<protein>
    <recommendedName>
        <fullName>Inactive zinc metalloprotease C354.09c</fullName>
    </recommendedName>
</protein>
<proteinExistence type="inferred from homology"/>
<accession>O43023</accession>
<sequence length="794" mass="88966">MTDEKHVYVPPPKDPPSYEEVALHSALNNSAPPNDGEQNETSMEEMEIIEPPSEDSSRFPLLRTKLAAIHEGWESACHSFEIRFASTFHRIPFQFLYLAVIATVIILASYYGYFDGVPAWRSVHHYGEDVLLNYIKGCDISDTRQQVMTLSSIPHLAGTVGDSSLLQMIMNRLYYEKGTIVDFREFYAYLNFPQLVSLSIDGDDSFHPSLIESYQVGGYDGVSIPTPATFGGSPSGFVNAPLVYANRGRIEDFEWLVNSGIYVESSIVLVRANQSDFALATANAEKYNASAILIFEDTYLTSLDNLNQVYPAGPYPSANSLYRGSVANHYYYVGDPLTPGWSAHEETNRISPKDANVLPSIVSIPITFNDGIELLKRLQGHGHLVKDSNWCQDLAPVLSEVWTGSKISSPGLEVNVLQDIEDKQKIINIMAQIDGYESDQILVVGAPRDSWCTGASDSSVGTSLLIDVISTFANMAQDLSWKPRRTIVFASWDARQFNAIGSTEFLEYWKESLEAKAVAYINVDVAVSGDTFTARTVPGLKKVIQRAFDVANEEDEMKAANIITDDFDYTSDLTSFLTFAGIPVVNLAFERNEENPTPMPFLGSCEDTVSWIDTFGSEYWENAARLGKIWSYLILFLANDPVVPYDLEDEINGVGEMLKRIPEIPGANALDLRKINEEFSELLESLIRFEDEIREWKSLMMHNSYTVSVKKHPELEGYNAKLARFERSFLDEAGLPGHEWYKHLIYGPNLRNSHSQLFPSIFDALLYGDVEAAQKEVKRIALALDRAHNEIRFA</sequence>
<organism>
    <name type="scientific">Schizosaccharomyces pombe (strain 972 / ATCC 24843)</name>
    <name type="common">Fission yeast</name>
    <dbReference type="NCBI Taxonomy" id="284812"/>
    <lineage>
        <taxon>Eukaryota</taxon>
        <taxon>Fungi</taxon>
        <taxon>Dikarya</taxon>
        <taxon>Ascomycota</taxon>
        <taxon>Taphrinomycotina</taxon>
        <taxon>Schizosaccharomycetes</taxon>
        <taxon>Schizosaccharomycetales</taxon>
        <taxon>Schizosaccharomycetaceae</taxon>
        <taxon>Schizosaccharomyces</taxon>
    </lineage>
</organism>
<dbReference type="EMBL" id="CU329671">
    <property type="protein sequence ID" value="CAA17809.1"/>
    <property type="molecule type" value="Genomic_DNA"/>
</dbReference>
<dbReference type="PIR" id="T40289">
    <property type="entry name" value="T40289"/>
</dbReference>
<dbReference type="SMR" id="O43023"/>
<dbReference type="BioGRID" id="277468">
    <property type="interactions" value="21"/>
</dbReference>
<dbReference type="FunCoup" id="O43023">
    <property type="interactions" value="51"/>
</dbReference>
<dbReference type="STRING" id="284812.O43023"/>
<dbReference type="iPTMnet" id="O43023"/>
<dbReference type="PaxDb" id="4896-SPBC354.09c.1"/>
<dbReference type="EnsemblFungi" id="SPBC354.09c.1">
    <property type="protein sequence ID" value="SPBC354.09c.1:pep"/>
    <property type="gene ID" value="SPBC354.09c"/>
</dbReference>
<dbReference type="KEGG" id="spo:2540952"/>
<dbReference type="PomBase" id="SPBC354.09c"/>
<dbReference type="VEuPathDB" id="FungiDB:SPBC354.09c"/>
<dbReference type="eggNOG" id="KOG2195">
    <property type="taxonomic scope" value="Eukaryota"/>
</dbReference>
<dbReference type="HOGENOM" id="CLU_005688_2_1_1"/>
<dbReference type="InParanoid" id="O43023"/>
<dbReference type="OMA" id="YPRKDGR"/>
<dbReference type="PhylomeDB" id="O43023"/>
<dbReference type="Reactome" id="R-SPO-8963693">
    <property type="pathway name" value="Aspartate and asparagine metabolism"/>
</dbReference>
<dbReference type="Reactome" id="R-SPO-8980692">
    <property type="pathway name" value="RHOA GTPase cycle"/>
</dbReference>
<dbReference type="Reactome" id="R-SPO-9013026">
    <property type="pathway name" value="RHOB GTPase cycle"/>
</dbReference>
<dbReference type="Reactome" id="R-SPO-9013106">
    <property type="pathway name" value="RHOC GTPase cycle"/>
</dbReference>
<dbReference type="Reactome" id="R-SPO-9013406">
    <property type="pathway name" value="RHOQ GTPase cycle"/>
</dbReference>
<dbReference type="Reactome" id="R-SPO-9696270">
    <property type="pathway name" value="RND2 GTPase cycle"/>
</dbReference>
<dbReference type="Reactome" id="R-SPO-9696273">
    <property type="pathway name" value="RND1 GTPase cycle"/>
</dbReference>
<dbReference type="PRO" id="PR:O43023"/>
<dbReference type="Proteomes" id="UP000002485">
    <property type="component" value="Chromosome II"/>
</dbReference>
<dbReference type="GO" id="GO:0000329">
    <property type="term" value="C:fungal-type vacuole membrane"/>
    <property type="evidence" value="ECO:0000305"/>
    <property type="project" value="PomBase"/>
</dbReference>
<dbReference type="GO" id="GO:0004180">
    <property type="term" value="F:carboxypeptidase activity"/>
    <property type="evidence" value="ECO:0000318"/>
    <property type="project" value="GO_Central"/>
</dbReference>
<dbReference type="GO" id="GO:0043328">
    <property type="term" value="P:protein transport to vacuole involved in ubiquitin-dependent protein catabolic process via the multivesicular body sorting pathway"/>
    <property type="evidence" value="ECO:0000266"/>
    <property type="project" value="PomBase"/>
</dbReference>
<dbReference type="FunFam" id="1.20.930.40:FF:000014">
    <property type="entry name" value="Inactive zinc metalloprotease C354.09c"/>
    <property type="match status" value="1"/>
</dbReference>
<dbReference type="FunFam" id="3.50.30.30:FF:000110">
    <property type="entry name" value="Inactive zinc metalloprotease C354.09c"/>
    <property type="match status" value="1"/>
</dbReference>
<dbReference type="FunFam" id="3.40.630.10:FF:000101">
    <property type="entry name" value="N-acetylated alpha-linked acidic dipeptidase like 1"/>
    <property type="match status" value="1"/>
</dbReference>
<dbReference type="Gene3D" id="3.50.30.30">
    <property type="match status" value="1"/>
</dbReference>
<dbReference type="Gene3D" id="1.20.930.40">
    <property type="entry name" value="Transferrin receptor-like, dimerisation domain"/>
    <property type="match status" value="1"/>
</dbReference>
<dbReference type="Gene3D" id="3.40.630.10">
    <property type="entry name" value="Zn peptidases"/>
    <property type="match status" value="1"/>
</dbReference>
<dbReference type="InterPro" id="IPR046450">
    <property type="entry name" value="PA_dom_sf"/>
</dbReference>
<dbReference type="InterPro" id="IPR007484">
    <property type="entry name" value="Peptidase_M28"/>
</dbReference>
<dbReference type="InterPro" id="IPR039373">
    <property type="entry name" value="Peptidase_M28B"/>
</dbReference>
<dbReference type="InterPro" id="IPR007365">
    <property type="entry name" value="TFR-like_dimer_dom"/>
</dbReference>
<dbReference type="InterPro" id="IPR036757">
    <property type="entry name" value="TFR-like_dimer_dom_sf"/>
</dbReference>
<dbReference type="PANTHER" id="PTHR10404">
    <property type="entry name" value="N-ACETYLATED-ALPHA-LINKED ACIDIC DIPEPTIDASE"/>
    <property type="match status" value="1"/>
</dbReference>
<dbReference type="PANTHER" id="PTHR10404:SF46">
    <property type="entry name" value="VACUOLAR PROTEIN SORTING-ASSOCIATED PROTEIN 70"/>
    <property type="match status" value="1"/>
</dbReference>
<dbReference type="Pfam" id="PF04389">
    <property type="entry name" value="Peptidase_M28"/>
    <property type="match status" value="1"/>
</dbReference>
<dbReference type="Pfam" id="PF04253">
    <property type="entry name" value="TFR_dimer"/>
    <property type="match status" value="1"/>
</dbReference>
<dbReference type="SUPFAM" id="SSF52025">
    <property type="entry name" value="PA domain"/>
    <property type="match status" value="1"/>
</dbReference>
<dbReference type="SUPFAM" id="SSF47672">
    <property type="entry name" value="Transferrin receptor-like dimerisation domain"/>
    <property type="match status" value="1"/>
</dbReference>
<dbReference type="SUPFAM" id="SSF53187">
    <property type="entry name" value="Zn-dependent exopeptidases"/>
    <property type="match status" value="1"/>
</dbReference>
<feature type="chain" id="PRO_0000174141" description="Inactive zinc metalloprotease C354.09c">
    <location>
        <begin position="1"/>
        <end position="794"/>
    </location>
</feature>
<feature type="transmembrane region" description="Helical" evidence="1">
    <location>
        <begin position="91"/>
        <end position="111"/>
    </location>
</feature>
<feature type="region of interest" description="Disordered" evidence="2">
    <location>
        <begin position="1"/>
        <end position="56"/>
    </location>
</feature>
<gene>
    <name type="ORF">SPBC354.09c</name>
</gene>
<name>YGV9_SCHPO</name>
<comment type="subcellular location">
    <subcellularLocation>
        <location evidence="3">Membrane</location>
        <topology evidence="3">Single-pass membrane protein</topology>
    </subcellularLocation>
</comment>
<comment type="similarity">
    <text evidence="3">Belongs to the peptidase M28 family. M28B subfamily.</text>
</comment>
<comment type="caution">
    <text evidence="3">Although related to the peptidase M28 family, it lacks the conserved zinc-binding and active sites and therefore has probably lost hydrolase activity.</text>
</comment>
<evidence type="ECO:0000255" key="1"/>
<evidence type="ECO:0000256" key="2">
    <source>
        <dbReference type="SAM" id="MobiDB-lite"/>
    </source>
</evidence>
<evidence type="ECO:0000305" key="3"/>
<keyword id="KW-0472">Membrane</keyword>
<keyword id="KW-1185">Reference proteome</keyword>
<keyword id="KW-0812">Transmembrane</keyword>
<keyword id="KW-1133">Transmembrane helix</keyword>
<reference key="1">
    <citation type="journal article" date="2002" name="Nature">
        <title>The genome sequence of Schizosaccharomyces pombe.</title>
        <authorList>
            <person name="Wood V."/>
            <person name="Gwilliam R."/>
            <person name="Rajandream M.A."/>
            <person name="Lyne M.H."/>
            <person name="Lyne R."/>
            <person name="Stewart A."/>
            <person name="Sgouros J.G."/>
            <person name="Peat N."/>
            <person name="Hayles J."/>
            <person name="Baker S.G."/>
            <person name="Basham D."/>
            <person name="Bowman S."/>
            <person name="Brooks K."/>
            <person name="Brown D."/>
            <person name="Brown S."/>
            <person name="Chillingworth T."/>
            <person name="Churcher C.M."/>
            <person name="Collins M."/>
            <person name="Connor R."/>
            <person name="Cronin A."/>
            <person name="Davis P."/>
            <person name="Feltwell T."/>
            <person name="Fraser A."/>
            <person name="Gentles S."/>
            <person name="Goble A."/>
            <person name="Hamlin N."/>
            <person name="Harris D.E."/>
            <person name="Hidalgo J."/>
            <person name="Hodgson G."/>
            <person name="Holroyd S."/>
            <person name="Hornsby T."/>
            <person name="Howarth S."/>
            <person name="Huckle E.J."/>
            <person name="Hunt S."/>
            <person name="Jagels K."/>
            <person name="James K.D."/>
            <person name="Jones L."/>
            <person name="Jones M."/>
            <person name="Leather S."/>
            <person name="McDonald S."/>
            <person name="McLean J."/>
            <person name="Mooney P."/>
            <person name="Moule S."/>
            <person name="Mungall K.L."/>
            <person name="Murphy L.D."/>
            <person name="Niblett D."/>
            <person name="Odell C."/>
            <person name="Oliver K."/>
            <person name="O'Neil S."/>
            <person name="Pearson D."/>
            <person name="Quail M.A."/>
            <person name="Rabbinowitsch E."/>
            <person name="Rutherford K.M."/>
            <person name="Rutter S."/>
            <person name="Saunders D."/>
            <person name="Seeger K."/>
            <person name="Sharp S."/>
            <person name="Skelton J."/>
            <person name="Simmonds M.N."/>
            <person name="Squares R."/>
            <person name="Squares S."/>
            <person name="Stevens K."/>
            <person name="Taylor K."/>
            <person name="Taylor R.G."/>
            <person name="Tivey A."/>
            <person name="Walsh S.V."/>
            <person name="Warren T."/>
            <person name="Whitehead S."/>
            <person name="Woodward J.R."/>
            <person name="Volckaert G."/>
            <person name="Aert R."/>
            <person name="Robben J."/>
            <person name="Grymonprez B."/>
            <person name="Weltjens I."/>
            <person name="Vanstreels E."/>
            <person name="Rieger M."/>
            <person name="Schaefer M."/>
            <person name="Mueller-Auer S."/>
            <person name="Gabel C."/>
            <person name="Fuchs M."/>
            <person name="Duesterhoeft A."/>
            <person name="Fritzc C."/>
            <person name="Holzer E."/>
            <person name="Moestl D."/>
            <person name="Hilbert H."/>
            <person name="Borzym K."/>
            <person name="Langer I."/>
            <person name="Beck A."/>
            <person name="Lehrach H."/>
            <person name="Reinhardt R."/>
            <person name="Pohl T.M."/>
            <person name="Eger P."/>
            <person name="Zimmermann W."/>
            <person name="Wedler H."/>
            <person name="Wambutt R."/>
            <person name="Purnelle B."/>
            <person name="Goffeau A."/>
            <person name="Cadieu E."/>
            <person name="Dreano S."/>
            <person name="Gloux S."/>
            <person name="Lelaure V."/>
            <person name="Mottier S."/>
            <person name="Galibert F."/>
            <person name="Aves S.J."/>
            <person name="Xiang Z."/>
            <person name="Hunt C."/>
            <person name="Moore K."/>
            <person name="Hurst S.M."/>
            <person name="Lucas M."/>
            <person name="Rochet M."/>
            <person name="Gaillardin C."/>
            <person name="Tallada V.A."/>
            <person name="Garzon A."/>
            <person name="Thode G."/>
            <person name="Daga R.R."/>
            <person name="Cruzado L."/>
            <person name="Jimenez J."/>
            <person name="Sanchez M."/>
            <person name="del Rey F."/>
            <person name="Benito J."/>
            <person name="Dominguez A."/>
            <person name="Revuelta J.L."/>
            <person name="Moreno S."/>
            <person name="Armstrong J."/>
            <person name="Forsburg S.L."/>
            <person name="Cerutti L."/>
            <person name="Lowe T."/>
            <person name="McCombie W.R."/>
            <person name="Paulsen I."/>
            <person name="Potashkin J."/>
            <person name="Shpakovski G.V."/>
            <person name="Ussery D."/>
            <person name="Barrell B.G."/>
            <person name="Nurse P."/>
        </authorList>
    </citation>
    <scope>NUCLEOTIDE SEQUENCE [LARGE SCALE GENOMIC DNA]</scope>
    <source>
        <strain>972 / ATCC 24843</strain>
    </source>
</reference>